<evidence type="ECO:0000255" key="1">
    <source>
        <dbReference type="HAMAP-Rule" id="MF_00420"/>
    </source>
</evidence>
<name>PURL_METTM</name>
<accession>P26500</accession>
<accession>D9PYN1</accession>
<sequence length="714" mass="76997">MVLTDSEIEFIRKELGRDPNPLEYGMLDVMFSEHCSYKSSRPVLGFFPTEGEGVIIGPGDDAGVVEVTDELAMAIGIESHNHPSAIEPYGGAGTGIGGILRDIISMGAMPIALLDSLRFGYLEDQKSRYLFEHVVKGISDYGNRVGVPTVAGEVEFDDNFQLNPLVNVMCAGLVRKDEIKRGIAPRPGDVFLLMGGRTGRDGIHGVTFASEELTSSSELEDRPAVQVGDPFTKKMVMEASFEIMEKIEVSGVKDLGGGGLTCCISELVAKCDNGARVNLEAIPLREEGMTPYEIMLSESQERMIFVLSPDRVDEAMEICRKYELPAAVIGEVTDTGRMIVESEGKVIADLPAKLLADPPVIEREAKKPDLPEGQVEVQHPLLTEALLKLLSSPNIASKRWVYRQYDHEVQIRTVVKPGDDAAVLRVDEKTGVALTVDCNSIHTKLDPYGGGAASVGEAIRNVVSMGAWPLCIVDCLNFGNPEKPEVFWQFRECVRGMADMAETFGTPVISGNVSFYNETEGVTVNPSPVVGVAGRLPLDSIKTMDFKAEGEKIIVIGDTKPELGASEYLRTVHGIVDGKPPETDLRAEFDAANSVRRIIERFGDKVTAIHDCSAGGIGVAVAEMAIKSGIGATIDTGKIPGSFSNIHEALFSESNGRYILTVTGSVEEIIQELEVPCAVIGTTGGGALKFDDVALDVSELYDAYHGVIEAYMST</sequence>
<feature type="chain" id="PRO_0000100517" description="Phosphoribosylformylglycinamidine synthase subunit PurL">
    <location>
        <begin position="1"/>
        <end position="714"/>
    </location>
</feature>
<feature type="active site" evidence="1">
    <location>
        <position position="34"/>
    </location>
</feature>
<feature type="active site" description="Proton acceptor" evidence="1">
    <location>
        <position position="80"/>
    </location>
</feature>
<feature type="binding site" evidence="1">
    <location>
        <position position="37"/>
    </location>
    <ligand>
        <name>ATP</name>
        <dbReference type="ChEBI" id="CHEBI:30616"/>
    </ligand>
</feature>
<feature type="binding site" evidence="1">
    <location>
        <position position="78"/>
    </location>
    <ligand>
        <name>Mg(2+)</name>
        <dbReference type="ChEBI" id="CHEBI:18420"/>
        <label>1</label>
    </ligand>
</feature>
<feature type="binding site" evidence="1">
    <location>
        <begin position="79"/>
        <end position="82"/>
    </location>
    <ligand>
        <name>substrate</name>
    </ligand>
</feature>
<feature type="binding site" evidence="1">
    <location>
        <position position="101"/>
    </location>
    <ligand>
        <name>substrate</name>
    </ligand>
</feature>
<feature type="binding site" evidence="1">
    <location>
        <position position="102"/>
    </location>
    <ligand>
        <name>Mg(2+)</name>
        <dbReference type="ChEBI" id="CHEBI:18420"/>
        <label>2</label>
    </ligand>
</feature>
<feature type="binding site" evidence="1">
    <location>
        <position position="226"/>
    </location>
    <ligand>
        <name>substrate</name>
    </ligand>
</feature>
<feature type="binding site" evidence="1">
    <location>
        <position position="254"/>
    </location>
    <ligand>
        <name>Mg(2+)</name>
        <dbReference type="ChEBI" id="CHEBI:18420"/>
        <label>2</label>
    </ligand>
</feature>
<feature type="binding site" evidence="1">
    <location>
        <begin position="298"/>
        <end position="300"/>
    </location>
    <ligand>
        <name>substrate</name>
    </ligand>
</feature>
<feature type="binding site" evidence="1">
    <location>
        <position position="474"/>
    </location>
    <ligand>
        <name>ATP</name>
        <dbReference type="ChEBI" id="CHEBI:30616"/>
    </ligand>
</feature>
<feature type="binding site" evidence="1">
    <location>
        <position position="511"/>
    </location>
    <ligand>
        <name>ATP</name>
        <dbReference type="ChEBI" id="CHEBI:30616"/>
    </ligand>
</feature>
<feature type="binding site" evidence="1">
    <location>
        <position position="512"/>
    </location>
    <ligand>
        <name>Mg(2+)</name>
        <dbReference type="ChEBI" id="CHEBI:18420"/>
        <label>1</label>
    </ligand>
</feature>
<feature type="binding site" evidence="1">
    <location>
        <position position="514"/>
    </location>
    <ligand>
        <name>substrate</name>
    </ligand>
</feature>
<keyword id="KW-0067">ATP-binding</keyword>
<keyword id="KW-0963">Cytoplasm</keyword>
<keyword id="KW-0436">Ligase</keyword>
<keyword id="KW-0460">Magnesium</keyword>
<keyword id="KW-0479">Metal-binding</keyword>
<keyword id="KW-0547">Nucleotide-binding</keyword>
<keyword id="KW-0658">Purine biosynthesis</keyword>
<protein>
    <recommendedName>
        <fullName evidence="1">Phosphoribosylformylglycinamidine synthase subunit PurL</fullName>
        <shortName evidence="1">FGAM synthase</shortName>
        <ecNumber evidence="1">6.3.5.3</ecNumber>
    </recommendedName>
    <alternativeName>
        <fullName evidence="1">Formylglycinamide ribonucleotide amidotransferase subunit II</fullName>
        <shortName evidence="1">FGAR amidotransferase II</shortName>
        <shortName evidence="1">FGAR-AT II</shortName>
    </alternativeName>
    <alternativeName>
        <fullName evidence="1">Glutamine amidotransferase PurL</fullName>
    </alternativeName>
    <alternativeName>
        <fullName evidence="1">Phosphoribosylformylglycinamidine synthase subunit II</fullName>
    </alternativeName>
</protein>
<organism>
    <name type="scientific">Methanothermobacter marburgensis (strain ATCC BAA-927 / DSM 2133 / JCM 14651 / NBRC 100331 / OCM 82 / Marburg)</name>
    <name type="common">Methanobacterium thermoautotrophicum</name>
    <dbReference type="NCBI Taxonomy" id="79929"/>
    <lineage>
        <taxon>Archaea</taxon>
        <taxon>Methanobacteriati</taxon>
        <taxon>Methanobacteriota</taxon>
        <taxon>Methanomada group</taxon>
        <taxon>Methanobacteria</taxon>
        <taxon>Methanobacteriales</taxon>
        <taxon>Methanobacteriaceae</taxon>
        <taxon>Methanothermobacter</taxon>
    </lineage>
</organism>
<comment type="function">
    <text evidence="1">Part of the phosphoribosylformylglycinamidine synthase complex involved in the purines biosynthetic pathway. Catalyzes the ATP-dependent conversion of formylglycinamide ribonucleotide (FGAR) and glutamine to yield formylglycinamidine ribonucleotide (FGAM) and glutamate. The FGAM synthase complex is composed of three subunits. PurQ produces an ammonia molecule by converting glutamine to glutamate. PurL transfers the ammonia molecule to FGAR to form FGAM in an ATP-dependent manner. PurS interacts with PurQ and PurL and is thought to assist in the transfer of the ammonia molecule from PurQ to PurL.</text>
</comment>
<comment type="catalytic activity">
    <reaction evidence="1">
        <text>N(2)-formyl-N(1)-(5-phospho-beta-D-ribosyl)glycinamide + L-glutamine + ATP + H2O = 2-formamido-N(1)-(5-O-phospho-beta-D-ribosyl)acetamidine + L-glutamate + ADP + phosphate + H(+)</text>
        <dbReference type="Rhea" id="RHEA:17129"/>
        <dbReference type="ChEBI" id="CHEBI:15377"/>
        <dbReference type="ChEBI" id="CHEBI:15378"/>
        <dbReference type="ChEBI" id="CHEBI:29985"/>
        <dbReference type="ChEBI" id="CHEBI:30616"/>
        <dbReference type="ChEBI" id="CHEBI:43474"/>
        <dbReference type="ChEBI" id="CHEBI:58359"/>
        <dbReference type="ChEBI" id="CHEBI:147286"/>
        <dbReference type="ChEBI" id="CHEBI:147287"/>
        <dbReference type="ChEBI" id="CHEBI:456216"/>
        <dbReference type="EC" id="6.3.5.3"/>
    </reaction>
</comment>
<comment type="pathway">
    <text evidence="1">Purine metabolism; IMP biosynthesis via de novo pathway; 5-amino-1-(5-phospho-D-ribosyl)imidazole from N(2)-formyl-N(1)-(5-phospho-D-ribosyl)glycinamide: step 1/2.</text>
</comment>
<comment type="subunit">
    <text evidence="1">Monomer. Part of the FGAM synthase complex composed of 1 PurL, 1 PurQ and 2 PurS subunits.</text>
</comment>
<comment type="subcellular location">
    <subcellularLocation>
        <location evidence="1">Cytoplasm</location>
    </subcellularLocation>
</comment>
<comment type="similarity">
    <text evidence="1">Belongs to the FGAMS family.</text>
</comment>
<reference key="1">
    <citation type="journal article" date="2010" name="J. Bacteriol.">
        <title>Complete genome sequence of Methanothermobacter marburgensis, a methanoarchaeon model organism.</title>
        <authorList>
            <person name="Liesegang H."/>
            <person name="Kaster A.K."/>
            <person name="Wiezer A."/>
            <person name="Goenrich M."/>
            <person name="Wollherr A."/>
            <person name="Seedorf H."/>
            <person name="Gottschalk G."/>
            <person name="Thauer R.K."/>
        </authorList>
    </citation>
    <scope>NUCLEOTIDE SEQUENCE [LARGE SCALE GENOMIC DNA]</scope>
    <source>
        <strain>ATCC BAA-927 / DSM 2133 / JCM 14651 / NBRC 100331 / OCM 82 / Marburg</strain>
    </source>
</reference>
<reference key="2">
    <citation type="journal article" date="1991" name="J. Biol. Chem.">
        <title>Isoleucyl-tRNA synthetase of Methanobacterium thermoautotrophicum Marburg. Cloning of the gene, nucleotide sequence, and localization of a base change conferring resistance to pseudomonic acid.</title>
        <authorList>
            <person name="Jenal U."/>
            <person name="Rechsteiner T."/>
            <person name="Tan P.-Y."/>
            <person name="Buehlmann E."/>
            <person name="Meile L."/>
            <person name="Leisinger T."/>
        </authorList>
    </citation>
    <scope>NUCLEOTIDE SEQUENCE [GENOMIC DNA] OF 1-129</scope>
    <source>
        <strain>ATCC BAA-927 / DSM 2133 / JCM 14651 / NBRC 100331 / OCM 82 / Marburg</strain>
    </source>
</reference>
<proteinExistence type="inferred from homology"/>
<gene>
    <name evidence="1" type="primary">purL</name>
    <name type="ordered locus">MTBMA_c17610</name>
</gene>
<dbReference type="EC" id="6.3.5.3" evidence="1"/>
<dbReference type="EMBL" id="M59245">
    <property type="protein sequence ID" value="AAA72951.1"/>
    <property type="molecule type" value="Genomic_DNA"/>
</dbReference>
<dbReference type="EMBL" id="CP001710">
    <property type="protein sequence ID" value="ADL59329.1"/>
    <property type="molecule type" value="Genomic_DNA"/>
</dbReference>
<dbReference type="RefSeq" id="WP_013296539.1">
    <property type="nucleotide sequence ID" value="NC_014408.1"/>
</dbReference>
<dbReference type="SMR" id="P26500"/>
<dbReference type="STRING" id="79929.MTBMA_c17610"/>
<dbReference type="PaxDb" id="79929-MTBMA_c17610"/>
<dbReference type="GeneID" id="43707511"/>
<dbReference type="GeneID" id="9705472"/>
<dbReference type="KEGG" id="mmg:MTBMA_c17610"/>
<dbReference type="PATRIC" id="fig|79929.8.peg.1698"/>
<dbReference type="HOGENOM" id="CLU_003100_0_1_2"/>
<dbReference type="OrthoDB" id="8251at2157"/>
<dbReference type="UniPathway" id="UPA00074">
    <property type="reaction ID" value="UER00128"/>
</dbReference>
<dbReference type="Proteomes" id="UP000000345">
    <property type="component" value="Chromosome"/>
</dbReference>
<dbReference type="GO" id="GO:0005737">
    <property type="term" value="C:cytoplasm"/>
    <property type="evidence" value="ECO:0007669"/>
    <property type="project" value="UniProtKB-SubCell"/>
</dbReference>
<dbReference type="GO" id="GO:0005524">
    <property type="term" value="F:ATP binding"/>
    <property type="evidence" value="ECO:0007669"/>
    <property type="project" value="UniProtKB-UniRule"/>
</dbReference>
<dbReference type="GO" id="GO:0000287">
    <property type="term" value="F:magnesium ion binding"/>
    <property type="evidence" value="ECO:0007669"/>
    <property type="project" value="UniProtKB-UniRule"/>
</dbReference>
<dbReference type="GO" id="GO:0004642">
    <property type="term" value="F:phosphoribosylformylglycinamidine synthase activity"/>
    <property type="evidence" value="ECO:0007669"/>
    <property type="project" value="UniProtKB-UniRule"/>
</dbReference>
<dbReference type="GO" id="GO:0006189">
    <property type="term" value="P:'de novo' IMP biosynthetic process"/>
    <property type="evidence" value="ECO:0007669"/>
    <property type="project" value="UniProtKB-UniRule"/>
</dbReference>
<dbReference type="CDD" id="cd02203">
    <property type="entry name" value="PurL_repeat1"/>
    <property type="match status" value="1"/>
</dbReference>
<dbReference type="CDD" id="cd02204">
    <property type="entry name" value="PurL_repeat2"/>
    <property type="match status" value="1"/>
</dbReference>
<dbReference type="FunFam" id="3.30.1330.10:FF:000004">
    <property type="entry name" value="Phosphoribosylformylglycinamidine synthase subunit PurL"/>
    <property type="match status" value="1"/>
</dbReference>
<dbReference type="Gene3D" id="3.90.650.10">
    <property type="entry name" value="PurM-like C-terminal domain"/>
    <property type="match status" value="2"/>
</dbReference>
<dbReference type="Gene3D" id="3.30.1330.10">
    <property type="entry name" value="PurM-like, N-terminal domain"/>
    <property type="match status" value="2"/>
</dbReference>
<dbReference type="HAMAP" id="MF_00420">
    <property type="entry name" value="PurL_2"/>
    <property type="match status" value="1"/>
</dbReference>
<dbReference type="InterPro" id="IPR010074">
    <property type="entry name" value="PRibForGlyAmidine_synth_PurL"/>
</dbReference>
<dbReference type="InterPro" id="IPR041609">
    <property type="entry name" value="PurL_linker"/>
</dbReference>
<dbReference type="InterPro" id="IPR010918">
    <property type="entry name" value="PurM-like_C_dom"/>
</dbReference>
<dbReference type="InterPro" id="IPR036676">
    <property type="entry name" value="PurM-like_C_sf"/>
</dbReference>
<dbReference type="InterPro" id="IPR016188">
    <property type="entry name" value="PurM-like_N"/>
</dbReference>
<dbReference type="InterPro" id="IPR036921">
    <property type="entry name" value="PurM-like_N_sf"/>
</dbReference>
<dbReference type="NCBIfam" id="TIGR01736">
    <property type="entry name" value="FGAM_synth_II"/>
    <property type="match status" value="1"/>
</dbReference>
<dbReference type="NCBIfam" id="NF002290">
    <property type="entry name" value="PRK01213.1"/>
    <property type="match status" value="1"/>
</dbReference>
<dbReference type="PANTHER" id="PTHR43555">
    <property type="entry name" value="PHOSPHORIBOSYLFORMYLGLYCINAMIDINE SYNTHASE SUBUNIT PURL"/>
    <property type="match status" value="1"/>
</dbReference>
<dbReference type="PANTHER" id="PTHR43555:SF1">
    <property type="entry name" value="PHOSPHORIBOSYLFORMYLGLYCINAMIDINE SYNTHASE SUBUNIT PURL"/>
    <property type="match status" value="1"/>
</dbReference>
<dbReference type="Pfam" id="PF00586">
    <property type="entry name" value="AIRS"/>
    <property type="match status" value="2"/>
</dbReference>
<dbReference type="Pfam" id="PF02769">
    <property type="entry name" value="AIRS_C"/>
    <property type="match status" value="2"/>
</dbReference>
<dbReference type="Pfam" id="PF18072">
    <property type="entry name" value="FGAR-AT_linker"/>
    <property type="match status" value="1"/>
</dbReference>
<dbReference type="PIRSF" id="PIRSF001587">
    <property type="entry name" value="FGAM_synthase_II"/>
    <property type="match status" value="1"/>
</dbReference>
<dbReference type="SUPFAM" id="SSF56042">
    <property type="entry name" value="PurM C-terminal domain-like"/>
    <property type="match status" value="2"/>
</dbReference>
<dbReference type="SUPFAM" id="SSF55326">
    <property type="entry name" value="PurM N-terminal domain-like"/>
    <property type="match status" value="2"/>
</dbReference>